<dbReference type="EC" id="1.14.14.16" evidence="1"/>
<dbReference type="EMBL" id="DQ341430">
    <property type="protein sequence ID" value="ABC69212.1"/>
    <property type="molecule type" value="Genomic_DNA"/>
</dbReference>
<dbReference type="SMR" id="Q2LA59"/>
<dbReference type="GO" id="GO:0005789">
    <property type="term" value="C:endoplasmic reticulum membrane"/>
    <property type="evidence" value="ECO:0007669"/>
    <property type="project" value="UniProtKB-SubCell"/>
</dbReference>
<dbReference type="GO" id="GO:0103069">
    <property type="term" value="F:17-hydroxyprogesterone 21-hydroxylase activity"/>
    <property type="evidence" value="ECO:0007669"/>
    <property type="project" value="RHEA"/>
</dbReference>
<dbReference type="GO" id="GO:0020037">
    <property type="term" value="F:heme binding"/>
    <property type="evidence" value="ECO:0007669"/>
    <property type="project" value="InterPro"/>
</dbReference>
<dbReference type="GO" id="GO:0005506">
    <property type="term" value="F:iron ion binding"/>
    <property type="evidence" value="ECO:0007669"/>
    <property type="project" value="InterPro"/>
</dbReference>
<dbReference type="GO" id="GO:0106309">
    <property type="term" value="F:progesterone 21-hydroxylase activity"/>
    <property type="evidence" value="ECO:0007669"/>
    <property type="project" value="RHEA"/>
</dbReference>
<dbReference type="GO" id="GO:0004508">
    <property type="term" value="F:steroid 17-alpha-monooxygenase activity"/>
    <property type="evidence" value="ECO:0007669"/>
    <property type="project" value="TreeGrafter"/>
</dbReference>
<dbReference type="GO" id="GO:0005496">
    <property type="term" value="F:steroid binding"/>
    <property type="evidence" value="ECO:0007669"/>
    <property type="project" value="UniProtKB-KW"/>
</dbReference>
<dbReference type="GO" id="GO:0008395">
    <property type="term" value="F:steroid hydroxylase activity"/>
    <property type="evidence" value="ECO:0000250"/>
    <property type="project" value="UniProtKB"/>
</dbReference>
<dbReference type="GO" id="GO:0042446">
    <property type="term" value="P:hormone biosynthetic process"/>
    <property type="evidence" value="ECO:0007669"/>
    <property type="project" value="TreeGrafter"/>
</dbReference>
<dbReference type="GO" id="GO:0042448">
    <property type="term" value="P:progesterone metabolic process"/>
    <property type="evidence" value="ECO:0007669"/>
    <property type="project" value="TreeGrafter"/>
</dbReference>
<dbReference type="GO" id="GO:0006694">
    <property type="term" value="P:steroid biosynthetic process"/>
    <property type="evidence" value="ECO:0007669"/>
    <property type="project" value="UniProtKB-KW"/>
</dbReference>
<dbReference type="GO" id="GO:0008202">
    <property type="term" value="P:steroid metabolic process"/>
    <property type="evidence" value="ECO:0000250"/>
    <property type="project" value="UniProtKB"/>
</dbReference>
<dbReference type="CDD" id="cd20674">
    <property type="entry name" value="CYP21"/>
    <property type="match status" value="1"/>
</dbReference>
<dbReference type="FunFam" id="1.10.630.10:FF:000049">
    <property type="entry name" value="steroid 21-hydroxylase isoform X1"/>
    <property type="match status" value="1"/>
</dbReference>
<dbReference type="Gene3D" id="1.10.630.10">
    <property type="entry name" value="Cytochrome P450"/>
    <property type="match status" value="1"/>
</dbReference>
<dbReference type="InterPro" id="IPR001128">
    <property type="entry name" value="Cyt_P450"/>
</dbReference>
<dbReference type="InterPro" id="IPR017972">
    <property type="entry name" value="Cyt_P450_CS"/>
</dbReference>
<dbReference type="InterPro" id="IPR002401">
    <property type="entry name" value="Cyt_P450_E_grp-I"/>
</dbReference>
<dbReference type="InterPro" id="IPR036396">
    <property type="entry name" value="Cyt_P450_sf"/>
</dbReference>
<dbReference type="PANTHER" id="PTHR24289">
    <property type="entry name" value="STEROID 17-ALPHA-HYDROXYLASE/17,20 LYASE"/>
    <property type="match status" value="1"/>
</dbReference>
<dbReference type="PANTHER" id="PTHR24289:SF17">
    <property type="entry name" value="STEROID 21-HYDROXYLASE ISOFORM X1"/>
    <property type="match status" value="1"/>
</dbReference>
<dbReference type="Pfam" id="PF00067">
    <property type="entry name" value="p450"/>
    <property type="match status" value="1"/>
</dbReference>
<dbReference type="PRINTS" id="PR00463">
    <property type="entry name" value="EP450I"/>
</dbReference>
<dbReference type="PRINTS" id="PR00385">
    <property type="entry name" value="P450"/>
</dbReference>
<dbReference type="SUPFAM" id="SSF48264">
    <property type="entry name" value="Cytochrome P450"/>
    <property type="match status" value="1"/>
</dbReference>
<dbReference type="PROSITE" id="PS00086">
    <property type="entry name" value="CYTOCHROME_P450"/>
    <property type="match status" value="1"/>
</dbReference>
<protein>
    <recommendedName>
        <fullName>Steroid 21-hydroxylase</fullName>
        <ecNumber evidence="1">1.14.14.16</ecNumber>
    </recommendedName>
    <alternativeName>
        <fullName>21-OHase</fullName>
    </alternativeName>
    <alternativeName>
        <fullName>Cytochrome P-450c21</fullName>
    </alternativeName>
    <alternativeName>
        <fullName>Cytochrome P450 21</fullName>
    </alternativeName>
    <alternativeName>
        <fullName>Cytochrome P450 XXI</fullName>
    </alternativeName>
    <alternativeName>
        <fullName>Cytochrome P450-C21</fullName>
    </alternativeName>
</protein>
<organism>
    <name type="scientific">Lynx lynx</name>
    <name type="common">Eurasian lynx</name>
    <name type="synonym">Felis lynx</name>
    <dbReference type="NCBI Taxonomy" id="13125"/>
    <lineage>
        <taxon>Eukaryota</taxon>
        <taxon>Metazoa</taxon>
        <taxon>Chordata</taxon>
        <taxon>Craniata</taxon>
        <taxon>Vertebrata</taxon>
        <taxon>Euteleostomi</taxon>
        <taxon>Mammalia</taxon>
        <taxon>Eutheria</taxon>
        <taxon>Laurasiatheria</taxon>
        <taxon>Carnivora</taxon>
        <taxon>Feliformia</taxon>
        <taxon>Felidae</taxon>
        <taxon>Felinae</taxon>
        <taxon>Lynx</taxon>
    </lineage>
</organism>
<proteinExistence type="inferred from homology"/>
<keyword id="KW-0256">Endoplasmic reticulum</keyword>
<keyword id="KW-0349">Heme</keyword>
<keyword id="KW-0408">Iron</keyword>
<keyword id="KW-0446">Lipid-binding</keyword>
<keyword id="KW-0472">Membrane</keyword>
<keyword id="KW-0479">Metal-binding</keyword>
<keyword id="KW-0492">Microsome</keyword>
<keyword id="KW-0503">Monooxygenase</keyword>
<keyword id="KW-0560">Oxidoreductase</keyword>
<keyword id="KW-0754">Steroid-binding</keyword>
<keyword id="KW-0755">Steroidogenesis</keyword>
<feature type="chain" id="PRO_0000269711" description="Steroid 21-hydroxylase">
    <location>
        <begin position="1"/>
        <end position="492"/>
    </location>
</feature>
<feature type="binding site" evidence="2">
    <location>
        <position position="91"/>
    </location>
    <ligand>
        <name>heme b</name>
        <dbReference type="ChEBI" id="CHEBI:60344"/>
    </ligand>
</feature>
<feature type="binding site" evidence="2">
    <location>
        <position position="120"/>
    </location>
    <ligand>
        <name>heme b</name>
        <dbReference type="ChEBI" id="CHEBI:60344"/>
    </ligand>
</feature>
<feature type="binding site" evidence="1">
    <location>
        <position position="231"/>
    </location>
    <ligand>
        <name>17alpha-hydroxyprogesterone</name>
        <dbReference type="ChEBI" id="CHEBI:17252"/>
    </ligand>
</feature>
<feature type="binding site" evidence="2">
    <location>
        <position position="231"/>
    </location>
    <ligand>
        <name>progesterone</name>
        <dbReference type="ChEBI" id="CHEBI:17026"/>
    </ligand>
</feature>
<feature type="binding site" evidence="2">
    <location>
        <position position="363"/>
    </location>
    <ligand>
        <name>heme b</name>
        <dbReference type="ChEBI" id="CHEBI:60344"/>
    </ligand>
</feature>
<feature type="binding site" evidence="2">
    <location>
        <position position="424"/>
    </location>
    <ligand>
        <name>heme b</name>
        <dbReference type="ChEBI" id="CHEBI:60344"/>
    </ligand>
</feature>
<feature type="binding site" description="axial binding residue" evidence="2">
    <location>
        <position position="426"/>
    </location>
    <ligand>
        <name>heme b</name>
        <dbReference type="ChEBI" id="CHEBI:60344"/>
    </ligand>
    <ligandPart>
        <name>Fe</name>
        <dbReference type="ChEBI" id="CHEBI:18248"/>
    </ligandPart>
</feature>
<reference key="1">
    <citation type="submission" date="2005-12" db="EMBL/GenBank/DDBJ databases">
        <title>Phylogenetic analysis of a steroid 21-hydroxylase gene in some species of animals and a man.</title>
        <authorList>
            <person name="Kosowska B."/>
            <person name="Brzezinska K."/>
            <person name="Dobosz T."/>
            <person name="Moska M."/>
            <person name="Strzala T."/>
            <person name="Marszalek B."/>
            <person name="Schmidt K."/>
        </authorList>
    </citation>
    <scope>NUCLEOTIDE SEQUENCE [GENOMIC DNA]</scope>
    <source>
        <tissue>Muscle</tissue>
    </source>
</reference>
<accession>Q2LA59</accession>
<gene>
    <name type="primary">CYP21</name>
</gene>
<comment type="function">
    <text evidence="1">Specifically catalyzes the 21-hydroxylation of steroids. Required for the adrenal synthesis of mineralocorticoids and glucocorticoids.</text>
</comment>
<comment type="catalytic activity">
    <reaction evidence="1">
        <text>17alpha-hydroxyprogesterone + reduced [NADPH--hemoprotein reductase] + O2 = 11-deoxycortisol + oxidized [NADPH--hemoprotein reductase] + H2O + H(+)</text>
        <dbReference type="Rhea" id="RHEA:50308"/>
        <dbReference type="Rhea" id="RHEA-COMP:11964"/>
        <dbReference type="Rhea" id="RHEA-COMP:11965"/>
        <dbReference type="ChEBI" id="CHEBI:15377"/>
        <dbReference type="ChEBI" id="CHEBI:15378"/>
        <dbReference type="ChEBI" id="CHEBI:15379"/>
        <dbReference type="ChEBI" id="CHEBI:17252"/>
        <dbReference type="ChEBI" id="CHEBI:28324"/>
        <dbReference type="ChEBI" id="CHEBI:57618"/>
        <dbReference type="ChEBI" id="CHEBI:58210"/>
        <dbReference type="EC" id="1.14.14.16"/>
    </reaction>
</comment>
<comment type="catalytic activity">
    <reaction evidence="1">
        <text>progesterone + reduced [NADPH--hemoprotein reductase] + O2 = 21-hydroxyprogesterone + oxidized [NADPH--hemoprotein reductase] + H2O + H(+)</text>
        <dbReference type="Rhea" id="RHEA:50304"/>
        <dbReference type="Rhea" id="RHEA-COMP:11964"/>
        <dbReference type="Rhea" id="RHEA-COMP:11965"/>
        <dbReference type="ChEBI" id="CHEBI:15377"/>
        <dbReference type="ChEBI" id="CHEBI:15378"/>
        <dbReference type="ChEBI" id="CHEBI:15379"/>
        <dbReference type="ChEBI" id="CHEBI:16973"/>
        <dbReference type="ChEBI" id="CHEBI:17026"/>
        <dbReference type="ChEBI" id="CHEBI:57618"/>
        <dbReference type="ChEBI" id="CHEBI:58210"/>
        <dbReference type="EC" id="1.14.14.16"/>
    </reaction>
</comment>
<comment type="cofactor">
    <cofactor evidence="1">
        <name>heme b</name>
        <dbReference type="ChEBI" id="CHEBI:60344"/>
    </cofactor>
</comment>
<comment type="subcellular location">
    <subcellularLocation>
        <location>Endoplasmic reticulum membrane</location>
        <topology>Peripheral membrane protein</topology>
    </subcellularLocation>
    <subcellularLocation>
        <location>Microsome membrane</location>
        <topology>Peripheral membrane protein</topology>
    </subcellularLocation>
</comment>
<comment type="domain">
    <text>The leucine-rich hydrophobic amino acid N-terminal region probably helps to anchor the protein to the microsomal membrane.</text>
</comment>
<comment type="similarity">
    <text evidence="3">Belongs to the cytochrome P450 family.</text>
</comment>
<evidence type="ECO:0000250" key="1">
    <source>
        <dbReference type="UniProtKB" id="P00191"/>
    </source>
</evidence>
<evidence type="ECO:0000250" key="2">
    <source>
        <dbReference type="UniProtKB" id="P08686"/>
    </source>
</evidence>
<evidence type="ECO:0000305" key="3"/>
<sequence>MLLLGLLLLTALAGARLLWNKWKYRSLHLPPLAPGFLHLLQPDLPIYLLGLTQKLGPVYRLRLGLQDVVVLNSKRTIEEAMIRRWVDFAGRPQMPSYKLVSQPYQDLSLGDYSLLWKAHKKLTRSALLLGIRNSMEPLVEQLTQEFCERMRAQAGTPVAIQKEFSFLTCSVICCLTFGDKEDTLVHAFHDCVQDLMKSWEHWSIQVLDIVPFLRFFPNPGLQRLKQALENRDRIVEKQLRQHKDSMVAGQWRDMTDYMLQGMGKPRAEKGHGRLLEGHVHMSVVDLFIGGTETTATTLSWAVAFLLHHPEIQQRLQEELDCELGPGASGSRVPLKDPSRLPLLTATIAEVLRLRPVVPLALPHRTTRHSSILGYDIPEGTVVIPNLQGAHLDDTVWEQPHEFRPDRFLVPGASPRVLAFGCGARVCLGEPLARLELFVVLARLLHAFTLLPPTGPLPSLRPRSHCGINLTMQPFQVQLQPRGAVAPGPSQHQ</sequence>
<name>CP21A_LYNLY</name>